<proteinExistence type="evidence at protein level"/>
<gene>
    <name type="primary">Rps12</name>
</gene>
<dbReference type="EMBL" id="M18547">
    <property type="protein sequence ID" value="AAA42077.1"/>
    <property type="status" value="ALT_TERM"/>
    <property type="molecule type" value="mRNA"/>
</dbReference>
<dbReference type="PIR" id="S13074">
    <property type="entry name" value="R3RT12"/>
</dbReference>
<dbReference type="PDB" id="7QGG">
    <property type="method" value="EM"/>
    <property type="resolution" value="2.86 A"/>
    <property type="chains" value="SM=1-132"/>
</dbReference>
<dbReference type="PDBsum" id="7QGG"/>
<dbReference type="EMDB" id="EMD-13954"/>
<dbReference type="SMR" id="P63324"/>
<dbReference type="FunCoup" id="P63324">
    <property type="interactions" value="1247"/>
</dbReference>
<dbReference type="IntAct" id="P63324">
    <property type="interactions" value="3"/>
</dbReference>
<dbReference type="STRING" id="10116.ENSRNOP00000022184"/>
<dbReference type="iPTMnet" id="P63324"/>
<dbReference type="PhosphoSitePlus" id="P63324"/>
<dbReference type="SwissPalm" id="P63324"/>
<dbReference type="jPOST" id="P63324"/>
<dbReference type="PaxDb" id="10116-ENSRNOP00000022184"/>
<dbReference type="AGR" id="RGD:1592281"/>
<dbReference type="AGR" id="RGD:2321033"/>
<dbReference type="AGR" id="RGD:62024"/>
<dbReference type="RGD" id="62024">
    <property type="gene designation" value="Rps12"/>
</dbReference>
<dbReference type="eggNOG" id="KOG3406">
    <property type="taxonomic scope" value="Eukaryota"/>
</dbReference>
<dbReference type="InParanoid" id="P63324"/>
<dbReference type="PhylomeDB" id="P63324"/>
<dbReference type="PRO" id="PR:P63324"/>
<dbReference type="Proteomes" id="UP000002494">
    <property type="component" value="Unplaced"/>
</dbReference>
<dbReference type="GO" id="GO:0022625">
    <property type="term" value="C:cytosolic large ribosomal subunit"/>
    <property type="evidence" value="ECO:0000314"/>
    <property type="project" value="RGD"/>
</dbReference>
<dbReference type="GO" id="GO:0022626">
    <property type="term" value="C:cytosolic ribosome"/>
    <property type="evidence" value="ECO:0000266"/>
    <property type="project" value="RGD"/>
</dbReference>
<dbReference type="GO" id="GO:0022627">
    <property type="term" value="C:cytosolic small ribosomal subunit"/>
    <property type="evidence" value="ECO:0000314"/>
    <property type="project" value="RGD"/>
</dbReference>
<dbReference type="GO" id="GO:0005730">
    <property type="term" value="C:nucleolus"/>
    <property type="evidence" value="ECO:0007669"/>
    <property type="project" value="UniProtKB-SubCell"/>
</dbReference>
<dbReference type="GO" id="GO:0032040">
    <property type="term" value="C:small-subunit processome"/>
    <property type="evidence" value="ECO:0000250"/>
    <property type="project" value="UniProtKB"/>
</dbReference>
<dbReference type="GO" id="GO:0045202">
    <property type="term" value="C:synapse"/>
    <property type="evidence" value="ECO:0000266"/>
    <property type="project" value="RGD"/>
</dbReference>
<dbReference type="GO" id="GO:0003735">
    <property type="term" value="F:structural constituent of ribosome"/>
    <property type="evidence" value="ECO:0000266"/>
    <property type="project" value="RGD"/>
</dbReference>
<dbReference type="GO" id="GO:1990145">
    <property type="term" value="P:maintenance of translational fidelity"/>
    <property type="evidence" value="ECO:0000318"/>
    <property type="project" value="GO_Central"/>
</dbReference>
<dbReference type="GO" id="GO:0090263">
    <property type="term" value="P:positive regulation of canonical Wnt signaling pathway"/>
    <property type="evidence" value="ECO:0000266"/>
    <property type="project" value="RGD"/>
</dbReference>
<dbReference type="GO" id="GO:0042274">
    <property type="term" value="P:ribosomal small subunit biogenesis"/>
    <property type="evidence" value="ECO:0000250"/>
    <property type="project" value="UniProtKB"/>
</dbReference>
<dbReference type="FunFam" id="3.30.1330.30:FF:000011">
    <property type="entry name" value="40S ribosomal protein S12"/>
    <property type="match status" value="1"/>
</dbReference>
<dbReference type="Gene3D" id="3.30.1330.30">
    <property type="match status" value="1"/>
</dbReference>
<dbReference type="InterPro" id="IPR029064">
    <property type="entry name" value="Ribosomal_eL30-like_sf"/>
</dbReference>
<dbReference type="InterPro" id="IPR004038">
    <property type="entry name" value="Ribosomal_eL8/eL30/eS12/Gad45"/>
</dbReference>
<dbReference type="InterPro" id="IPR000530">
    <property type="entry name" value="Ribosomal_eS12"/>
</dbReference>
<dbReference type="InterPro" id="IPR047860">
    <property type="entry name" value="Ribosomal_eS12_CS"/>
</dbReference>
<dbReference type="PANTHER" id="PTHR11843">
    <property type="entry name" value="40S RIBOSOMAL PROTEIN S12"/>
    <property type="match status" value="1"/>
</dbReference>
<dbReference type="Pfam" id="PF01248">
    <property type="entry name" value="Ribosomal_L7Ae"/>
    <property type="match status" value="1"/>
</dbReference>
<dbReference type="PRINTS" id="PR00972">
    <property type="entry name" value="RIBSOMALS12E"/>
</dbReference>
<dbReference type="SUPFAM" id="SSF55315">
    <property type="entry name" value="L30e-like"/>
    <property type="match status" value="1"/>
</dbReference>
<dbReference type="PROSITE" id="PS01189">
    <property type="entry name" value="RIBOSOMAL_S12E"/>
    <property type="match status" value="1"/>
</dbReference>
<evidence type="ECO:0000250" key="1">
    <source>
        <dbReference type="UniProtKB" id="P25398"/>
    </source>
</evidence>
<evidence type="ECO:0000250" key="2">
    <source>
        <dbReference type="UniProtKB" id="P63323"/>
    </source>
</evidence>
<evidence type="ECO:0000250" key="3">
    <source>
        <dbReference type="UniProtKB" id="P80455"/>
    </source>
</evidence>
<evidence type="ECO:0000269" key="4">
    <source>
    </source>
</evidence>
<evidence type="ECO:0000269" key="5">
    <source ref="3"/>
</evidence>
<evidence type="ECO:0000305" key="6"/>
<reference key="1">
    <citation type="journal article" date="1987" name="J. Biol. Chem.">
        <title>The primary structure of rat ribosomal protein S12. The relationship of rat S12 to other ribosomal proteins and a correlation of the amino acid sequences of rat and yeast ribosomal proteins.</title>
        <authorList>
            <person name="Lin A."/>
            <person name="Chan Y.-L."/>
            <person name="Jones R."/>
            <person name="Wool I.G."/>
        </authorList>
    </citation>
    <scope>NUCLEOTIDE SEQUENCE [MRNA]</scope>
    <scope>PROTEIN SEQUENCE OF 2-132</scope>
    <scope>ACETYLATION AT ALA-2</scope>
    <source>
        <strain>Sprague-Dawley</strain>
        <tissue>Liver</tissue>
    </source>
</reference>
<reference key="2">
    <citation type="journal article" date="1990" name="Biochim. Biophys. Acta">
        <title>The primary structure of rat ribosomal proteins: the amino acid sequences of L27a and L28 and corrections in the sequences of S4 and S12.</title>
        <authorList>
            <person name="Wool I.G."/>
            <person name="Chan Y.-L."/>
            <person name="Paz V."/>
            <person name="Olvera J."/>
        </authorList>
    </citation>
    <scope>SEQUENCE REVISION</scope>
</reference>
<reference key="3">
    <citation type="submission" date="2006-08" db="UniProtKB">
        <authorList>
            <person name="Bienvenut W.V."/>
            <person name="von Kriegsheim A.F."/>
            <person name="Kolch W."/>
        </authorList>
    </citation>
    <scope>PROTEIN SEQUENCE OF 2-33</scope>
    <scope>CLEAVAGE OF INITIATOR METHIONINE</scope>
    <scope>ACETYLATION AT ALA-2</scope>
    <scope>IDENTIFICATION BY MASS SPECTROMETRY</scope>
    <source>
        <tissue>Pheochromocytoma</tissue>
    </source>
</reference>
<sequence length="132" mass="14525">MAEEGIAAGGVMDVNTALQEVLKTALIHDGLARGIREAAKALDKRQAHLCVLASNCDEPMYVKLVEALLAEHQINLIKVDDNKKLGEWVGLCKIDREGKPRKVVGCSCVVVKDYGKESQAKDVIEEYFKCKK</sequence>
<keyword id="KW-0002">3D-structure</keyword>
<keyword id="KW-0007">Acetylation</keyword>
<keyword id="KW-0903">Direct protein sequencing</keyword>
<keyword id="KW-0539">Nucleus</keyword>
<keyword id="KW-1185">Reference proteome</keyword>
<keyword id="KW-0687">Ribonucleoprotein</keyword>
<keyword id="KW-0689">Ribosomal protein</keyword>
<protein>
    <recommendedName>
        <fullName evidence="6">Small ribosomal subunit protein eS12</fullName>
    </recommendedName>
    <alternativeName>
        <fullName>40S ribosomal protein S12</fullName>
    </alternativeName>
</protein>
<organism>
    <name type="scientific">Rattus norvegicus</name>
    <name type="common">Rat</name>
    <dbReference type="NCBI Taxonomy" id="10116"/>
    <lineage>
        <taxon>Eukaryota</taxon>
        <taxon>Metazoa</taxon>
        <taxon>Chordata</taxon>
        <taxon>Craniata</taxon>
        <taxon>Vertebrata</taxon>
        <taxon>Euteleostomi</taxon>
        <taxon>Mammalia</taxon>
        <taxon>Eutheria</taxon>
        <taxon>Euarchontoglires</taxon>
        <taxon>Glires</taxon>
        <taxon>Rodentia</taxon>
        <taxon>Myomorpha</taxon>
        <taxon>Muroidea</taxon>
        <taxon>Muridae</taxon>
        <taxon>Murinae</taxon>
        <taxon>Rattus</taxon>
    </lineage>
</organism>
<comment type="function">
    <text evidence="1 3">Part of the small subunit (SSU) processome, first precursor of the small eukaryotic ribosomal subunit. During the assembly of the SSU processome in the nucleolus, many ribosome biogenesis factors, an RNA chaperone and ribosomal proteins associate with the nascent pre-rRNA and work in concert to generate RNA folding, modifications, rearrangements and cleavage as well as targeted degradation of pre-ribosomal RNA by the RNA exosome (By similarity). Subunit of the 40S ribosomal complex (By similarity).</text>
</comment>
<comment type="subunit">
    <text evidence="1 3">Part of the small subunit (SSU) processome, composed of more than 70 proteins and the RNA chaperone small nucleolar RNA (snoRNA) U3 (By similarity). Subunit of the 40S ribosomal complex (By similarity).</text>
</comment>
<comment type="subcellular location">
    <subcellularLocation>
        <location evidence="1">Nucleus</location>
        <location evidence="1">Nucleolus</location>
    </subcellularLocation>
</comment>
<comment type="similarity">
    <text evidence="6">Belongs to the eukaryotic ribosomal protein eS12 family.</text>
</comment>
<feature type="initiator methionine" description="Removed" evidence="4 5">
    <location>
        <position position="1"/>
    </location>
</feature>
<feature type="chain" id="PRO_0000122326" description="Small ribosomal subunit protein eS12">
    <location>
        <begin position="2"/>
        <end position="132"/>
    </location>
</feature>
<feature type="modified residue" description="N-acetylalanine" evidence="4 5">
    <location>
        <position position="2"/>
    </location>
</feature>
<feature type="modified residue" description="N6-succinyllysine" evidence="2">
    <location>
        <position position="129"/>
    </location>
</feature>
<accession>P63324</accession>
<accession>P09388</accession>
<accession>P12728</accession>
<name>RS12_RAT</name>